<protein>
    <recommendedName>
        <fullName evidence="1">Ribosome-binding factor A</fullName>
    </recommendedName>
</protein>
<gene>
    <name evidence="1" type="primary">rbfA</name>
    <name type="ordered locus">GTNG_1119</name>
</gene>
<keyword id="KW-0963">Cytoplasm</keyword>
<keyword id="KW-0690">Ribosome biogenesis</keyword>
<sequence>MNIRATRVGEQMKKELSDIIGRKLKDPRIGFVTVTDVRVTGDLQQAKVYISVFGDDEQRENTLKALEKAKGFIRSEIGQRIRLRKTPEILFEIDETIEYGSRIERLIRQISDEDGRDSEEVNDEPKNG</sequence>
<reference key="1">
    <citation type="journal article" date="2007" name="Proc. Natl. Acad. Sci. U.S.A.">
        <title>Genome and proteome of long-chain alkane degrading Geobacillus thermodenitrificans NG80-2 isolated from a deep-subsurface oil reservoir.</title>
        <authorList>
            <person name="Feng L."/>
            <person name="Wang W."/>
            <person name="Cheng J."/>
            <person name="Ren Y."/>
            <person name="Zhao G."/>
            <person name="Gao C."/>
            <person name="Tang Y."/>
            <person name="Liu X."/>
            <person name="Han W."/>
            <person name="Peng X."/>
            <person name="Liu R."/>
            <person name="Wang L."/>
        </authorList>
    </citation>
    <scope>NUCLEOTIDE SEQUENCE [LARGE SCALE GENOMIC DNA]</scope>
    <source>
        <strain>NG80-2</strain>
    </source>
</reference>
<organism>
    <name type="scientific">Geobacillus thermodenitrificans (strain NG80-2)</name>
    <dbReference type="NCBI Taxonomy" id="420246"/>
    <lineage>
        <taxon>Bacteria</taxon>
        <taxon>Bacillati</taxon>
        <taxon>Bacillota</taxon>
        <taxon>Bacilli</taxon>
        <taxon>Bacillales</taxon>
        <taxon>Anoxybacillaceae</taxon>
        <taxon>Geobacillus</taxon>
    </lineage>
</organism>
<accession>A4IMD9</accession>
<evidence type="ECO:0000255" key="1">
    <source>
        <dbReference type="HAMAP-Rule" id="MF_00003"/>
    </source>
</evidence>
<name>RBFA_GEOTN</name>
<proteinExistence type="inferred from homology"/>
<comment type="function">
    <text evidence="1">One of several proteins that assist in the late maturation steps of the functional core of the 30S ribosomal subunit. Associates with free 30S ribosomal subunits (but not with 30S subunits that are part of 70S ribosomes or polysomes). Required for efficient processing of 16S rRNA. May interact with the 5'-terminal helix region of 16S rRNA.</text>
</comment>
<comment type="subunit">
    <text evidence="1">Monomer. Binds 30S ribosomal subunits, but not 50S ribosomal subunits or 70S ribosomes.</text>
</comment>
<comment type="subcellular location">
    <subcellularLocation>
        <location evidence="1">Cytoplasm</location>
    </subcellularLocation>
</comment>
<comment type="similarity">
    <text evidence="1">Belongs to the RbfA family.</text>
</comment>
<dbReference type="EMBL" id="CP000557">
    <property type="protein sequence ID" value="ABO66493.1"/>
    <property type="molecule type" value="Genomic_DNA"/>
</dbReference>
<dbReference type="RefSeq" id="WP_008878542.1">
    <property type="nucleotide sequence ID" value="NC_009328.1"/>
</dbReference>
<dbReference type="SMR" id="A4IMD9"/>
<dbReference type="GeneID" id="87621289"/>
<dbReference type="KEGG" id="gtn:GTNG_1119"/>
<dbReference type="eggNOG" id="COG0858">
    <property type="taxonomic scope" value="Bacteria"/>
</dbReference>
<dbReference type="HOGENOM" id="CLU_089475_6_3_9"/>
<dbReference type="Proteomes" id="UP000001578">
    <property type="component" value="Chromosome"/>
</dbReference>
<dbReference type="GO" id="GO:0005829">
    <property type="term" value="C:cytosol"/>
    <property type="evidence" value="ECO:0007669"/>
    <property type="project" value="TreeGrafter"/>
</dbReference>
<dbReference type="GO" id="GO:0043024">
    <property type="term" value="F:ribosomal small subunit binding"/>
    <property type="evidence" value="ECO:0007669"/>
    <property type="project" value="TreeGrafter"/>
</dbReference>
<dbReference type="GO" id="GO:0030490">
    <property type="term" value="P:maturation of SSU-rRNA"/>
    <property type="evidence" value="ECO:0007669"/>
    <property type="project" value="UniProtKB-UniRule"/>
</dbReference>
<dbReference type="FunFam" id="3.30.300.20:FF:000009">
    <property type="entry name" value="Ribosome-binding factor A"/>
    <property type="match status" value="1"/>
</dbReference>
<dbReference type="Gene3D" id="3.30.300.20">
    <property type="match status" value="1"/>
</dbReference>
<dbReference type="HAMAP" id="MF_00003">
    <property type="entry name" value="RbfA"/>
    <property type="match status" value="1"/>
</dbReference>
<dbReference type="InterPro" id="IPR015946">
    <property type="entry name" value="KH_dom-like_a/b"/>
</dbReference>
<dbReference type="InterPro" id="IPR000238">
    <property type="entry name" value="RbfA"/>
</dbReference>
<dbReference type="InterPro" id="IPR023799">
    <property type="entry name" value="RbfA_dom_sf"/>
</dbReference>
<dbReference type="InterPro" id="IPR020053">
    <property type="entry name" value="Ribosome-bd_factorA_CS"/>
</dbReference>
<dbReference type="NCBIfam" id="TIGR00082">
    <property type="entry name" value="rbfA"/>
    <property type="match status" value="1"/>
</dbReference>
<dbReference type="PANTHER" id="PTHR33515">
    <property type="entry name" value="RIBOSOME-BINDING FACTOR A, CHLOROPLASTIC-RELATED"/>
    <property type="match status" value="1"/>
</dbReference>
<dbReference type="PANTHER" id="PTHR33515:SF1">
    <property type="entry name" value="RIBOSOME-BINDING FACTOR A, CHLOROPLASTIC-RELATED"/>
    <property type="match status" value="1"/>
</dbReference>
<dbReference type="Pfam" id="PF02033">
    <property type="entry name" value="RBFA"/>
    <property type="match status" value="1"/>
</dbReference>
<dbReference type="SUPFAM" id="SSF89919">
    <property type="entry name" value="Ribosome-binding factor A, RbfA"/>
    <property type="match status" value="1"/>
</dbReference>
<dbReference type="PROSITE" id="PS01319">
    <property type="entry name" value="RBFA"/>
    <property type="match status" value="1"/>
</dbReference>
<feature type="chain" id="PRO_1000000114" description="Ribosome-binding factor A">
    <location>
        <begin position="1"/>
        <end position="128"/>
    </location>
</feature>